<accession>Q6HCT1</accession>
<dbReference type="EC" id="2.1.3.15" evidence="1"/>
<dbReference type="EMBL" id="AE017355">
    <property type="protein sequence ID" value="AAT59085.1"/>
    <property type="molecule type" value="Genomic_DNA"/>
</dbReference>
<dbReference type="RefSeq" id="WP_000942870.1">
    <property type="nucleotide sequence ID" value="NC_005957.1"/>
</dbReference>
<dbReference type="RefSeq" id="YP_038645.1">
    <property type="nucleotide sequence ID" value="NC_005957.1"/>
</dbReference>
<dbReference type="SMR" id="Q6HCT1"/>
<dbReference type="KEGG" id="btk:BT9727_4330"/>
<dbReference type="PATRIC" id="fig|281309.8.peg.4616"/>
<dbReference type="HOGENOM" id="CLU_015486_1_1_9"/>
<dbReference type="UniPathway" id="UPA00655">
    <property type="reaction ID" value="UER00711"/>
</dbReference>
<dbReference type="Proteomes" id="UP000001301">
    <property type="component" value="Chromosome"/>
</dbReference>
<dbReference type="GO" id="GO:0009317">
    <property type="term" value="C:acetyl-CoA carboxylase complex"/>
    <property type="evidence" value="ECO:0007669"/>
    <property type="project" value="InterPro"/>
</dbReference>
<dbReference type="GO" id="GO:0003989">
    <property type="term" value="F:acetyl-CoA carboxylase activity"/>
    <property type="evidence" value="ECO:0007669"/>
    <property type="project" value="InterPro"/>
</dbReference>
<dbReference type="GO" id="GO:0005524">
    <property type="term" value="F:ATP binding"/>
    <property type="evidence" value="ECO:0007669"/>
    <property type="project" value="UniProtKB-KW"/>
</dbReference>
<dbReference type="GO" id="GO:0016743">
    <property type="term" value="F:carboxyl- or carbamoyltransferase activity"/>
    <property type="evidence" value="ECO:0007669"/>
    <property type="project" value="UniProtKB-UniRule"/>
</dbReference>
<dbReference type="GO" id="GO:0008270">
    <property type="term" value="F:zinc ion binding"/>
    <property type="evidence" value="ECO:0007669"/>
    <property type="project" value="UniProtKB-UniRule"/>
</dbReference>
<dbReference type="GO" id="GO:0006633">
    <property type="term" value="P:fatty acid biosynthetic process"/>
    <property type="evidence" value="ECO:0007669"/>
    <property type="project" value="UniProtKB-KW"/>
</dbReference>
<dbReference type="GO" id="GO:2001295">
    <property type="term" value="P:malonyl-CoA biosynthetic process"/>
    <property type="evidence" value="ECO:0007669"/>
    <property type="project" value="UniProtKB-UniRule"/>
</dbReference>
<dbReference type="Gene3D" id="3.90.226.10">
    <property type="entry name" value="2-enoyl-CoA Hydratase, Chain A, domain 1"/>
    <property type="match status" value="1"/>
</dbReference>
<dbReference type="HAMAP" id="MF_01395">
    <property type="entry name" value="AcetylCoA_CT_beta"/>
    <property type="match status" value="1"/>
</dbReference>
<dbReference type="InterPro" id="IPR034733">
    <property type="entry name" value="AcCoA_carboxyl_beta"/>
</dbReference>
<dbReference type="InterPro" id="IPR000438">
    <property type="entry name" value="Acetyl_CoA_COase_Trfase_b_su"/>
</dbReference>
<dbReference type="InterPro" id="IPR029045">
    <property type="entry name" value="ClpP/crotonase-like_dom_sf"/>
</dbReference>
<dbReference type="InterPro" id="IPR011762">
    <property type="entry name" value="COA_CT_N"/>
</dbReference>
<dbReference type="InterPro" id="IPR041010">
    <property type="entry name" value="Znf-ACC"/>
</dbReference>
<dbReference type="NCBIfam" id="TIGR00515">
    <property type="entry name" value="accD"/>
    <property type="match status" value="1"/>
</dbReference>
<dbReference type="PANTHER" id="PTHR42995">
    <property type="entry name" value="ACETYL-COENZYME A CARBOXYLASE CARBOXYL TRANSFERASE SUBUNIT BETA, CHLOROPLASTIC"/>
    <property type="match status" value="1"/>
</dbReference>
<dbReference type="PANTHER" id="PTHR42995:SF5">
    <property type="entry name" value="ACETYL-COENZYME A CARBOXYLASE CARBOXYL TRANSFERASE SUBUNIT BETA, CHLOROPLASTIC"/>
    <property type="match status" value="1"/>
</dbReference>
<dbReference type="Pfam" id="PF01039">
    <property type="entry name" value="Carboxyl_trans"/>
    <property type="match status" value="1"/>
</dbReference>
<dbReference type="Pfam" id="PF17848">
    <property type="entry name" value="Zn_ribbon_ACC"/>
    <property type="match status" value="1"/>
</dbReference>
<dbReference type="PRINTS" id="PR01070">
    <property type="entry name" value="ACCCTRFRASEB"/>
</dbReference>
<dbReference type="SUPFAM" id="SSF52096">
    <property type="entry name" value="ClpP/crotonase"/>
    <property type="match status" value="1"/>
</dbReference>
<dbReference type="PROSITE" id="PS50980">
    <property type="entry name" value="COA_CT_NTER"/>
    <property type="match status" value="1"/>
</dbReference>
<proteinExistence type="inferred from homology"/>
<feature type="chain" id="PRO_0000389688" description="Acetyl-coenzyme A carboxylase carboxyl transferase subunit beta">
    <location>
        <begin position="1"/>
        <end position="289"/>
    </location>
</feature>
<feature type="domain" description="CoA carboxyltransferase N-terminal" evidence="2">
    <location>
        <begin position="28"/>
        <end position="289"/>
    </location>
</feature>
<feature type="zinc finger region" description="C4-type" evidence="1">
    <location>
        <begin position="32"/>
        <end position="54"/>
    </location>
</feature>
<feature type="binding site" evidence="1">
    <location>
        <position position="32"/>
    </location>
    <ligand>
        <name>Zn(2+)</name>
        <dbReference type="ChEBI" id="CHEBI:29105"/>
    </ligand>
</feature>
<feature type="binding site" evidence="1">
    <location>
        <position position="35"/>
    </location>
    <ligand>
        <name>Zn(2+)</name>
        <dbReference type="ChEBI" id="CHEBI:29105"/>
    </ligand>
</feature>
<feature type="binding site" evidence="1">
    <location>
        <position position="51"/>
    </location>
    <ligand>
        <name>Zn(2+)</name>
        <dbReference type="ChEBI" id="CHEBI:29105"/>
    </ligand>
</feature>
<feature type="binding site" evidence="1">
    <location>
        <position position="54"/>
    </location>
    <ligand>
        <name>Zn(2+)</name>
        <dbReference type="ChEBI" id="CHEBI:29105"/>
    </ligand>
</feature>
<organism>
    <name type="scientific">Bacillus thuringiensis subsp. konkukian (strain 97-27)</name>
    <dbReference type="NCBI Taxonomy" id="281309"/>
    <lineage>
        <taxon>Bacteria</taxon>
        <taxon>Bacillati</taxon>
        <taxon>Bacillota</taxon>
        <taxon>Bacilli</taxon>
        <taxon>Bacillales</taxon>
        <taxon>Bacillaceae</taxon>
        <taxon>Bacillus</taxon>
        <taxon>Bacillus cereus group</taxon>
    </lineage>
</organism>
<gene>
    <name evidence="1" type="primary">accD</name>
    <name type="ordered locus">BT9727_4330</name>
</gene>
<reference key="1">
    <citation type="journal article" date="2006" name="J. Bacteriol.">
        <title>Pathogenomic sequence analysis of Bacillus cereus and Bacillus thuringiensis isolates closely related to Bacillus anthracis.</title>
        <authorList>
            <person name="Han C.S."/>
            <person name="Xie G."/>
            <person name="Challacombe J.F."/>
            <person name="Altherr M.R."/>
            <person name="Bhotika S.S."/>
            <person name="Bruce D."/>
            <person name="Campbell C.S."/>
            <person name="Campbell M.L."/>
            <person name="Chen J."/>
            <person name="Chertkov O."/>
            <person name="Cleland C."/>
            <person name="Dimitrijevic M."/>
            <person name="Doggett N.A."/>
            <person name="Fawcett J.J."/>
            <person name="Glavina T."/>
            <person name="Goodwin L.A."/>
            <person name="Hill K.K."/>
            <person name="Hitchcock P."/>
            <person name="Jackson P.J."/>
            <person name="Keim P."/>
            <person name="Kewalramani A.R."/>
            <person name="Longmire J."/>
            <person name="Lucas S."/>
            <person name="Malfatti S."/>
            <person name="McMurry K."/>
            <person name="Meincke L.J."/>
            <person name="Misra M."/>
            <person name="Moseman B.L."/>
            <person name="Mundt M."/>
            <person name="Munk A.C."/>
            <person name="Okinaka R.T."/>
            <person name="Parson-Quintana B."/>
            <person name="Reilly L.P."/>
            <person name="Richardson P."/>
            <person name="Robinson D.L."/>
            <person name="Rubin E."/>
            <person name="Saunders E."/>
            <person name="Tapia R."/>
            <person name="Tesmer J.G."/>
            <person name="Thayer N."/>
            <person name="Thompson L.S."/>
            <person name="Tice H."/>
            <person name="Ticknor L.O."/>
            <person name="Wills P.L."/>
            <person name="Brettin T.S."/>
            <person name="Gilna P."/>
        </authorList>
    </citation>
    <scope>NUCLEOTIDE SEQUENCE [LARGE SCALE GENOMIC DNA]</scope>
    <source>
        <strain>97-27</strain>
    </source>
</reference>
<protein>
    <recommendedName>
        <fullName evidence="1">Acetyl-coenzyme A carboxylase carboxyl transferase subunit beta</fullName>
        <shortName evidence="1">ACCase subunit beta</shortName>
        <shortName evidence="1">Acetyl-CoA carboxylase carboxyltransferase subunit beta</shortName>
        <ecNumber evidence="1">2.1.3.15</ecNumber>
    </recommendedName>
</protein>
<keyword id="KW-0067">ATP-binding</keyword>
<keyword id="KW-0963">Cytoplasm</keyword>
<keyword id="KW-0275">Fatty acid biosynthesis</keyword>
<keyword id="KW-0276">Fatty acid metabolism</keyword>
<keyword id="KW-0444">Lipid biosynthesis</keyword>
<keyword id="KW-0443">Lipid metabolism</keyword>
<keyword id="KW-0479">Metal-binding</keyword>
<keyword id="KW-0547">Nucleotide-binding</keyword>
<keyword id="KW-0808">Transferase</keyword>
<keyword id="KW-0862">Zinc</keyword>
<keyword id="KW-0863">Zinc-finger</keyword>
<comment type="function">
    <text evidence="1">Component of the acetyl coenzyme A carboxylase (ACC) complex. Biotin carboxylase (BC) catalyzes the carboxylation of biotin on its carrier protein (BCCP) and then the CO(2) group is transferred by the transcarboxylase to acetyl-CoA to form malonyl-CoA.</text>
</comment>
<comment type="catalytic activity">
    <reaction evidence="1">
        <text>N(6)-carboxybiotinyl-L-lysyl-[protein] + acetyl-CoA = N(6)-biotinyl-L-lysyl-[protein] + malonyl-CoA</text>
        <dbReference type="Rhea" id="RHEA:54728"/>
        <dbReference type="Rhea" id="RHEA-COMP:10505"/>
        <dbReference type="Rhea" id="RHEA-COMP:10506"/>
        <dbReference type="ChEBI" id="CHEBI:57288"/>
        <dbReference type="ChEBI" id="CHEBI:57384"/>
        <dbReference type="ChEBI" id="CHEBI:83144"/>
        <dbReference type="ChEBI" id="CHEBI:83145"/>
        <dbReference type="EC" id="2.1.3.15"/>
    </reaction>
</comment>
<comment type="cofactor">
    <cofactor evidence="1">
        <name>Zn(2+)</name>
        <dbReference type="ChEBI" id="CHEBI:29105"/>
    </cofactor>
    <text evidence="1">Binds 1 zinc ion per subunit.</text>
</comment>
<comment type="pathway">
    <text evidence="1">Lipid metabolism; malonyl-CoA biosynthesis; malonyl-CoA from acetyl-CoA: step 1/1.</text>
</comment>
<comment type="subunit">
    <text evidence="1">Acetyl-CoA carboxylase is a heterohexamer composed of biotin carboxyl carrier protein (AccB), biotin carboxylase (AccC) and two subunits each of ACCase subunit alpha (AccA) and ACCase subunit beta (AccD).</text>
</comment>
<comment type="subcellular location">
    <subcellularLocation>
        <location evidence="1">Cytoplasm</location>
    </subcellularLocation>
</comment>
<comment type="similarity">
    <text evidence="1">Belongs to the AccD/PCCB family.</text>
</comment>
<evidence type="ECO:0000255" key="1">
    <source>
        <dbReference type="HAMAP-Rule" id="MF_01395"/>
    </source>
</evidence>
<evidence type="ECO:0000255" key="2">
    <source>
        <dbReference type="PROSITE-ProRule" id="PRU01136"/>
    </source>
</evidence>
<name>ACCD_BACHK</name>
<sequence>MLRDLFVKKKKYAAIPSEQVRKDVPDGVMTKCPKCKKIMYTKEVLKNLKVCVNCGYHHPMNAWERLDSILDEGSFREYDKEMVSLNPLEFPDYEEKLESDRKKTELNEAVVTGEGTIDDMLVVVAVMDSRFRMGSMGSVVGEKIARAVEKAYDLQVPFIIFTASGGARMQEGILSLMQMAKTSVALKKHSNAGGLFISVMTHPTTGGVSASFASLGDYNLAEPGALIGFAGRRVIEQTVREKLPEDFQTAEFLLEHGQLDAVVHRDDMRESLRKILEVHQGGEMAVWQS</sequence>